<organism>
    <name type="scientific">Staphylococcus haemolyticus (strain JCSC1435)</name>
    <dbReference type="NCBI Taxonomy" id="279808"/>
    <lineage>
        <taxon>Bacteria</taxon>
        <taxon>Bacillati</taxon>
        <taxon>Bacillota</taxon>
        <taxon>Bacilli</taxon>
        <taxon>Bacillales</taxon>
        <taxon>Staphylococcaceae</taxon>
        <taxon>Staphylococcus</taxon>
    </lineage>
</organism>
<gene>
    <name evidence="1" type="primary">coaW</name>
    <name type="ordered locus">SH0905</name>
</gene>
<accession>Q4L811</accession>
<reference key="1">
    <citation type="journal article" date="2005" name="J. Bacteriol.">
        <title>Whole-genome sequencing of Staphylococcus haemolyticus uncovers the extreme plasticity of its genome and the evolution of human-colonizing staphylococcal species.</title>
        <authorList>
            <person name="Takeuchi F."/>
            <person name="Watanabe S."/>
            <person name="Baba T."/>
            <person name="Yuzawa H."/>
            <person name="Ito T."/>
            <person name="Morimoto Y."/>
            <person name="Kuroda M."/>
            <person name="Cui L."/>
            <person name="Takahashi M."/>
            <person name="Ankai A."/>
            <person name="Baba S."/>
            <person name="Fukui S."/>
            <person name="Lee J.C."/>
            <person name="Hiramatsu K."/>
        </authorList>
    </citation>
    <scope>NUCLEOTIDE SEQUENCE [LARGE SCALE GENOMIC DNA]</scope>
    <source>
        <strain>JCSC1435</strain>
    </source>
</reference>
<protein>
    <recommendedName>
        <fullName evidence="1">Type II pantothenate kinase</fullName>
        <ecNumber evidence="1">2.7.1.33</ecNumber>
    </recommendedName>
    <alternativeName>
        <fullName evidence="1">PanK-II</fullName>
    </alternativeName>
    <alternativeName>
        <fullName evidence="1">Pantothenic acid kinase</fullName>
    </alternativeName>
</protein>
<comment type="function">
    <text evidence="1">Catalyzes the phosphorylation of pantothenate (Pan), the first step in CoA biosynthesis.</text>
</comment>
<comment type="catalytic activity">
    <reaction evidence="1">
        <text>(R)-pantothenate + ATP = (R)-4'-phosphopantothenate + ADP + H(+)</text>
        <dbReference type="Rhea" id="RHEA:16373"/>
        <dbReference type="ChEBI" id="CHEBI:10986"/>
        <dbReference type="ChEBI" id="CHEBI:15378"/>
        <dbReference type="ChEBI" id="CHEBI:29032"/>
        <dbReference type="ChEBI" id="CHEBI:30616"/>
        <dbReference type="ChEBI" id="CHEBI:456216"/>
        <dbReference type="EC" id="2.7.1.33"/>
    </reaction>
</comment>
<comment type="pathway">
    <text evidence="1">Cofactor biosynthesis; coenzyme A biosynthesis; CoA from (R)-pantothenate: step 1/5.</text>
</comment>
<comment type="subunit">
    <text evidence="1">Homodimer.</text>
</comment>
<comment type="subcellular location">
    <subcellularLocation>
        <location evidence="1">Cytoplasm</location>
    </subcellularLocation>
</comment>
<comment type="similarity">
    <text evidence="1">Belongs to the type II pantothenate kinase family.</text>
</comment>
<name>COAW_STAHJ</name>
<dbReference type="EC" id="2.7.1.33" evidence="1"/>
<dbReference type="EMBL" id="AP006716">
    <property type="protein sequence ID" value="BAE04214.1"/>
    <property type="molecule type" value="Genomic_DNA"/>
</dbReference>
<dbReference type="RefSeq" id="WP_011275216.1">
    <property type="nucleotide sequence ID" value="NC_007168.1"/>
</dbReference>
<dbReference type="SMR" id="Q4L811"/>
<dbReference type="GeneID" id="93780293"/>
<dbReference type="KEGG" id="sha:SH0905"/>
<dbReference type="eggNOG" id="COG5146">
    <property type="taxonomic scope" value="Bacteria"/>
</dbReference>
<dbReference type="HOGENOM" id="CLU_087521_1_0_9"/>
<dbReference type="OrthoDB" id="358216at2"/>
<dbReference type="UniPathway" id="UPA00241">
    <property type="reaction ID" value="UER00352"/>
</dbReference>
<dbReference type="Proteomes" id="UP000000543">
    <property type="component" value="Chromosome"/>
</dbReference>
<dbReference type="GO" id="GO:0005829">
    <property type="term" value="C:cytosol"/>
    <property type="evidence" value="ECO:0007669"/>
    <property type="project" value="TreeGrafter"/>
</dbReference>
<dbReference type="GO" id="GO:0005524">
    <property type="term" value="F:ATP binding"/>
    <property type="evidence" value="ECO:0007669"/>
    <property type="project" value="UniProtKB-UniRule"/>
</dbReference>
<dbReference type="GO" id="GO:0004594">
    <property type="term" value="F:pantothenate kinase activity"/>
    <property type="evidence" value="ECO:0007669"/>
    <property type="project" value="UniProtKB-UniRule"/>
</dbReference>
<dbReference type="GO" id="GO:0015937">
    <property type="term" value="P:coenzyme A biosynthetic process"/>
    <property type="evidence" value="ECO:0007669"/>
    <property type="project" value="UniProtKB-UniRule"/>
</dbReference>
<dbReference type="Gene3D" id="3.30.420.40">
    <property type="match status" value="1"/>
</dbReference>
<dbReference type="HAMAP" id="MF_01273">
    <property type="entry name" value="Pantothen_kinase_2"/>
    <property type="match status" value="1"/>
</dbReference>
<dbReference type="InterPro" id="IPR043129">
    <property type="entry name" value="ATPase_NBD"/>
</dbReference>
<dbReference type="InterPro" id="IPR004567">
    <property type="entry name" value="Type_II_PanK"/>
</dbReference>
<dbReference type="InterPro" id="IPR011602">
    <property type="entry name" value="Type_II_PanK_bac"/>
</dbReference>
<dbReference type="NCBIfam" id="TIGR00555">
    <property type="entry name" value="panK_eukar"/>
    <property type="match status" value="1"/>
</dbReference>
<dbReference type="NCBIfam" id="NF009842">
    <property type="entry name" value="PRK13317.1"/>
    <property type="match status" value="1"/>
</dbReference>
<dbReference type="PANTHER" id="PTHR12280:SF20">
    <property type="entry name" value="4'-PHOSPHOPANTETHEINE PHOSPHATASE"/>
    <property type="match status" value="1"/>
</dbReference>
<dbReference type="PANTHER" id="PTHR12280">
    <property type="entry name" value="PANTOTHENATE KINASE"/>
    <property type="match status" value="1"/>
</dbReference>
<dbReference type="Pfam" id="PF03630">
    <property type="entry name" value="Fumble"/>
    <property type="match status" value="1"/>
</dbReference>
<dbReference type="PIRSF" id="PIRSF036940">
    <property type="entry name" value="PanK_bac_aCoA"/>
    <property type="match status" value="1"/>
</dbReference>
<dbReference type="SUPFAM" id="SSF53067">
    <property type="entry name" value="Actin-like ATPase domain"/>
    <property type="match status" value="1"/>
</dbReference>
<keyword id="KW-0067">ATP-binding</keyword>
<keyword id="KW-0173">Coenzyme A biosynthesis</keyword>
<keyword id="KW-0963">Cytoplasm</keyword>
<keyword id="KW-0418">Kinase</keyword>
<keyword id="KW-0547">Nucleotide-binding</keyword>
<keyword id="KW-0808">Transferase</keyword>
<evidence type="ECO:0000255" key="1">
    <source>
        <dbReference type="HAMAP-Rule" id="MF_01273"/>
    </source>
</evidence>
<feature type="chain" id="PRO_0000261354" description="Type II pantothenate kinase">
    <location>
        <begin position="1"/>
        <end position="266"/>
    </location>
</feature>
<feature type="active site" description="Proton acceptor" evidence="1">
    <location>
        <position position="70"/>
    </location>
</feature>
<feature type="binding site" evidence="1">
    <location>
        <begin position="6"/>
        <end position="13"/>
    </location>
    <ligand>
        <name>ATP</name>
        <dbReference type="ChEBI" id="CHEBI:30616"/>
    </ligand>
</feature>
<feature type="binding site" evidence="1">
    <location>
        <position position="99"/>
    </location>
    <ligand>
        <name>ATP</name>
        <dbReference type="ChEBI" id="CHEBI:30616"/>
    </ligand>
</feature>
<feature type="binding site" evidence="1">
    <location>
        <begin position="121"/>
        <end position="125"/>
    </location>
    <ligand>
        <name>ATP</name>
        <dbReference type="ChEBI" id="CHEBI:30616"/>
    </ligand>
</feature>
<feature type="binding site" evidence="1">
    <location>
        <position position="137"/>
    </location>
    <ligand>
        <name>ATP</name>
        <dbReference type="ChEBI" id="CHEBI:30616"/>
    </ligand>
</feature>
<feature type="binding site" evidence="1">
    <location>
        <position position="225"/>
    </location>
    <ligand>
        <name>ATP</name>
        <dbReference type="ChEBI" id="CHEBI:30616"/>
    </ligand>
</feature>
<sequence>MKVGIDAGGTLIKIVQESQQGRSYETKLTTNISEVIAWLNANTFESISLTGGNAGVIAENLNVDATIFVEFDASSKGLGMLLKEQGHHIDEYIFANVGTGTSLHYFDGKQQRRVGGVGTGGGMIQGLGYLLSQITDYEALTNLAQSGDRDTIDLKVKHIYKDTEPPIPGELTAANFGNVLHNLDVDFSPANKLASVVGVVGEVITTMAITVARENKTENVVYIGSSFNNNPLLREVIEDYTVLRGFKPYYIENGAFSGALGAIYLN</sequence>
<proteinExistence type="inferred from homology"/>